<keyword id="KW-0002">3D-structure</keyword>
<keyword id="KW-0963">Cytoplasm</keyword>
<keyword id="KW-0378">Hydrolase</keyword>
<keyword id="KW-1185">Reference proteome</keyword>
<keyword id="KW-0694">RNA-binding</keyword>
<keyword id="KW-0820">tRNA-binding</keyword>
<comment type="function">
    <text evidence="1">Hydrolyzes ribosome-free peptidyl-tRNAs (with 1 or more amino acids incorporated), which drop off the ribosome during protein synthesis, or as a result of ribosome stalling.</text>
</comment>
<comment type="function">
    <text evidence="1">Catalyzes the release of premature peptidyl moieties from peptidyl-tRNA molecules trapped in stalled 50S ribosomal subunits, and thus maintains levels of free tRNAs and 50S ribosomes.</text>
</comment>
<comment type="catalytic activity">
    <reaction evidence="1">
        <text>an N-acyl-L-alpha-aminoacyl-tRNA + H2O = an N-acyl-L-amino acid + a tRNA + H(+)</text>
        <dbReference type="Rhea" id="RHEA:54448"/>
        <dbReference type="Rhea" id="RHEA-COMP:10123"/>
        <dbReference type="Rhea" id="RHEA-COMP:13883"/>
        <dbReference type="ChEBI" id="CHEBI:15377"/>
        <dbReference type="ChEBI" id="CHEBI:15378"/>
        <dbReference type="ChEBI" id="CHEBI:59874"/>
        <dbReference type="ChEBI" id="CHEBI:78442"/>
        <dbReference type="ChEBI" id="CHEBI:138191"/>
        <dbReference type="EC" id="3.1.1.29"/>
    </reaction>
</comment>
<comment type="subunit">
    <text evidence="1 2 3">Monomer.</text>
</comment>
<comment type="subcellular location">
    <subcellularLocation>
        <location evidence="1">Cytoplasm</location>
    </subcellularLocation>
</comment>
<comment type="similarity">
    <text evidence="1">Belongs to the PTH family.</text>
</comment>
<proteinExistence type="evidence at protein level"/>
<name>PTH_VIBCH</name>
<gene>
    <name evidence="1" type="primary">pth</name>
    <name type="ordered locus">VC_2184</name>
</gene>
<organism>
    <name type="scientific">Vibrio cholerae serotype O1 (strain ATCC 39315 / El Tor Inaba N16961)</name>
    <dbReference type="NCBI Taxonomy" id="243277"/>
    <lineage>
        <taxon>Bacteria</taxon>
        <taxon>Pseudomonadati</taxon>
        <taxon>Pseudomonadota</taxon>
        <taxon>Gammaproteobacteria</taxon>
        <taxon>Vibrionales</taxon>
        <taxon>Vibrionaceae</taxon>
        <taxon>Vibrio</taxon>
    </lineage>
</organism>
<reference key="1">
    <citation type="journal article" date="2000" name="Nature">
        <title>DNA sequence of both chromosomes of the cholera pathogen Vibrio cholerae.</title>
        <authorList>
            <person name="Heidelberg J.F."/>
            <person name="Eisen J.A."/>
            <person name="Nelson W.C."/>
            <person name="Clayton R.A."/>
            <person name="Gwinn M.L."/>
            <person name="Dodson R.J."/>
            <person name="Haft D.H."/>
            <person name="Hickey E.K."/>
            <person name="Peterson J.D."/>
            <person name="Umayam L.A."/>
            <person name="Gill S.R."/>
            <person name="Nelson K.E."/>
            <person name="Read T.D."/>
            <person name="Tettelin H."/>
            <person name="Richardson D.L."/>
            <person name="Ermolaeva M.D."/>
            <person name="Vamathevan J.J."/>
            <person name="Bass S."/>
            <person name="Qin H."/>
            <person name="Dragoi I."/>
            <person name="Sellers P."/>
            <person name="McDonald L.A."/>
            <person name="Utterback T.R."/>
            <person name="Fleischmann R.D."/>
            <person name="Nierman W.C."/>
            <person name="White O."/>
            <person name="Salzberg S.L."/>
            <person name="Smith H.O."/>
            <person name="Colwell R.R."/>
            <person name="Mekalanos J.J."/>
            <person name="Venter J.C."/>
            <person name="Fraser C.M."/>
        </authorList>
    </citation>
    <scope>NUCLEOTIDE SEQUENCE [LARGE SCALE GENOMIC DNA]</scope>
    <source>
        <strain>ATCC 39315 / El Tor Inaba N16961</strain>
    </source>
</reference>
<reference evidence="4 5 6 7 8 9 10" key="2">
    <citation type="journal article" date="2017" name="RNA">
        <title>Unraveling the stereochemical and dynamic aspects of the catalytic site of bacterial peptidyl-tRNA hydrolase.</title>
        <authorList>
            <person name="Kabra A."/>
            <person name="Shahid S."/>
            <person name="Pal R.K."/>
            <person name="Yadav R."/>
            <person name="Pulavarti S.V."/>
            <person name="Jain A."/>
            <person name="Tripathi S."/>
            <person name="Arora A."/>
        </authorList>
    </citation>
    <scope>X-RAY CRYSTALLOGRAPHY (1.63 ANGSTROMS) OF 2-196</scope>
    <scope>STRUCTURE BY NMR OF 2-196</scope>
    <scope>SUBUNIT</scope>
    <source>
        <strain>ATCC 39315 / El Tor Inaba N16961</strain>
    </source>
</reference>
<reference evidence="11" key="3">
    <citation type="journal article" date="2018" name="Biochim. Biophys. Acta">
        <title>Role of methionine 71 in substrate recognition and structural integrity of bacterial peptidyl-tRNA hydrolase.</title>
        <authorList>
            <person name="Shahid S."/>
            <person name="Kabra A."/>
            <person name="Mundra S."/>
            <person name="Pal R.K."/>
            <person name="Tripathi S."/>
            <person name="Jain A."/>
            <person name="Arora A."/>
        </authorList>
    </citation>
    <scope>X-RAY CRYSTALLOGRAPHY (2.55 ANGSTROMS) OF 2-196</scope>
    <scope>SUBUNIT</scope>
</reference>
<protein>
    <recommendedName>
        <fullName evidence="1">Peptidyl-tRNA hydrolase</fullName>
        <shortName evidence="1">Pth</shortName>
        <ecNumber evidence="1">3.1.1.29</ecNumber>
    </recommendedName>
</protein>
<accession>Q9KQ21</accession>
<sequence length="196" mass="21483">MSQPIKLLVGLANPGPEYAKTRHNAGAWVVEELARIHNVTLKNEPKFFGLTGRLLINSQELRVLIPTTFMNLSGKAIAALANFYQIKPEEIMVAHDELDLPPGVAKFKQGGGHGGHNGLKDTISKLGNNKEFYRLRLGIGHPGHKDKVAGYVLGKAPAKEQECLDAAVDESVRCLEILMKDGLTKAQNRLHTFKAE</sequence>
<evidence type="ECO:0000255" key="1">
    <source>
        <dbReference type="HAMAP-Rule" id="MF_00083"/>
    </source>
</evidence>
<evidence type="ECO:0000269" key="2">
    <source>
    </source>
</evidence>
<evidence type="ECO:0000269" key="3">
    <source>
    </source>
</evidence>
<evidence type="ECO:0007744" key="4">
    <source>
        <dbReference type="PDB" id="2MJL"/>
    </source>
</evidence>
<evidence type="ECO:0007744" key="5">
    <source>
        <dbReference type="PDB" id="4Z86"/>
    </source>
</evidence>
<evidence type="ECO:0007744" key="6">
    <source>
        <dbReference type="PDB" id="4ZXP"/>
    </source>
</evidence>
<evidence type="ECO:0007744" key="7">
    <source>
        <dbReference type="PDB" id="5B6J"/>
    </source>
</evidence>
<evidence type="ECO:0007744" key="8">
    <source>
        <dbReference type="PDB" id="5GVZ"/>
    </source>
</evidence>
<evidence type="ECO:0007744" key="9">
    <source>
        <dbReference type="PDB" id="5IKE"/>
    </source>
</evidence>
<evidence type="ECO:0007744" key="10">
    <source>
        <dbReference type="PDB" id="5IMB"/>
    </source>
</evidence>
<evidence type="ECO:0007744" key="11">
    <source>
        <dbReference type="PDB" id="5ZK0"/>
    </source>
</evidence>
<evidence type="ECO:0007829" key="12">
    <source>
        <dbReference type="PDB" id="4Z86"/>
    </source>
</evidence>
<evidence type="ECO:0007829" key="13">
    <source>
        <dbReference type="PDB" id="5ZK0"/>
    </source>
</evidence>
<feature type="chain" id="PRO_0000187850" description="Peptidyl-tRNA hydrolase">
    <location>
        <begin position="1"/>
        <end position="196"/>
    </location>
</feature>
<feature type="active site" description="Proton acceptor" evidence="1">
    <location>
        <position position="23"/>
    </location>
</feature>
<feature type="binding site" evidence="1">
    <location>
        <position position="18"/>
    </location>
    <ligand>
        <name>tRNA</name>
        <dbReference type="ChEBI" id="CHEBI:17843"/>
    </ligand>
</feature>
<feature type="binding site" evidence="1">
    <location>
        <position position="69"/>
    </location>
    <ligand>
        <name>tRNA</name>
        <dbReference type="ChEBI" id="CHEBI:17843"/>
    </ligand>
</feature>
<feature type="binding site" evidence="1">
    <location>
        <position position="71"/>
    </location>
    <ligand>
        <name>tRNA</name>
        <dbReference type="ChEBI" id="CHEBI:17843"/>
    </ligand>
</feature>
<feature type="binding site" evidence="1">
    <location>
        <position position="117"/>
    </location>
    <ligand>
        <name>tRNA</name>
        <dbReference type="ChEBI" id="CHEBI:17843"/>
    </ligand>
</feature>
<feature type="site" description="Discriminates between blocked and unblocked aminoacyl-tRNA" evidence="1">
    <location>
        <position position="13"/>
    </location>
</feature>
<feature type="site" description="Stabilizes the basic form of H active site to accept a proton" evidence="1">
    <location>
        <position position="96"/>
    </location>
</feature>
<feature type="strand" evidence="12">
    <location>
        <begin position="6"/>
        <end position="10"/>
    </location>
</feature>
<feature type="turn" evidence="12">
    <location>
        <begin position="16"/>
        <end position="20"/>
    </location>
</feature>
<feature type="helix" evidence="12">
    <location>
        <begin position="22"/>
        <end position="24"/>
    </location>
</feature>
<feature type="helix" evidence="12">
    <location>
        <begin position="25"/>
        <end position="36"/>
    </location>
</feature>
<feature type="strand" evidence="12">
    <location>
        <begin position="42"/>
        <end position="44"/>
    </location>
</feature>
<feature type="helix" evidence="12">
    <location>
        <begin position="45"/>
        <end position="47"/>
    </location>
</feature>
<feature type="strand" evidence="12">
    <location>
        <begin position="49"/>
        <end position="56"/>
    </location>
</feature>
<feature type="strand" evidence="12">
    <location>
        <begin position="59"/>
        <end position="66"/>
    </location>
</feature>
<feature type="helix" evidence="12">
    <location>
        <begin position="70"/>
        <end position="72"/>
    </location>
</feature>
<feature type="helix" evidence="12">
    <location>
        <begin position="73"/>
        <end position="83"/>
    </location>
</feature>
<feature type="helix" evidence="12">
    <location>
        <begin position="88"/>
        <end position="90"/>
    </location>
</feature>
<feature type="strand" evidence="12">
    <location>
        <begin position="91"/>
        <end position="97"/>
    </location>
</feature>
<feature type="strand" evidence="12">
    <location>
        <begin position="105"/>
        <end position="109"/>
    </location>
</feature>
<feature type="helix" evidence="12">
    <location>
        <begin position="117"/>
        <end position="125"/>
    </location>
</feature>
<feature type="turn" evidence="12">
    <location>
        <begin position="126"/>
        <end position="128"/>
    </location>
</feature>
<feature type="strand" evidence="12">
    <location>
        <begin position="132"/>
        <end position="138"/>
    </location>
</feature>
<feature type="helix" evidence="12">
    <location>
        <begin position="145"/>
        <end position="147"/>
    </location>
</feature>
<feature type="helix" evidence="12">
    <location>
        <begin position="148"/>
        <end position="152"/>
    </location>
</feature>
<feature type="helix" evidence="12">
    <location>
        <begin position="158"/>
        <end position="181"/>
    </location>
</feature>
<feature type="helix" evidence="12">
    <location>
        <begin position="183"/>
        <end position="190"/>
    </location>
</feature>
<feature type="turn" evidence="13">
    <location>
        <begin position="193"/>
        <end position="195"/>
    </location>
</feature>
<dbReference type="EC" id="3.1.1.29" evidence="1"/>
<dbReference type="EMBL" id="AE003852">
    <property type="protein sequence ID" value="AAF95329.1"/>
    <property type="molecule type" value="Genomic_DNA"/>
</dbReference>
<dbReference type="PIR" id="C82107">
    <property type="entry name" value="C82107"/>
</dbReference>
<dbReference type="RefSeq" id="NP_231815.1">
    <property type="nucleotide sequence ID" value="NC_002505.1"/>
</dbReference>
<dbReference type="RefSeq" id="WP_000081944.1">
    <property type="nucleotide sequence ID" value="NZ_LT906614.1"/>
</dbReference>
<dbReference type="PDB" id="2MJL">
    <property type="method" value="NMR"/>
    <property type="chains" value="A=2-196"/>
</dbReference>
<dbReference type="PDB" id="4Z86">
    <property type="method" value="X-ray"/>
    <property type="resolution" value="1.63 A"/>
    <property type="chains" value="A/B=2-196"/>
</dbReference>
<dbReference type="PDB" id="4ZXP">
    <property type="method" value="X-ray"/>
    <property type="resolution" value="1.63 A"/>
    <property type="chains" value="A/B=2-196"/>
</dbReference>
<dbReference type="PDB" id="5B6J">
    <property type="method" value="X-ray"/>
    <property type="resolution" value="2.43 A"/>
    <property type="chains" value="A/B=2-196"/>
</dbReference>
<dbReference type="PDB" id="5EKT">
    <property type="method" value="X-ray"/>
    <property type="resolution" value="1.63 A"/>
    <property type="chains" value="A/B=2-196"/>
</dbReference>
<dbReference type="PDB" id="5GVZ">
    <property type="method" value="X-ray"/>
    <property type="resolution" value="1.75 A"/>
    <property type="chains" value="A=2-196"/>
</dbReference>
<dbReference type="PDB" id="5IKE">
    <property type="method" value="X-ray"/>
    <property type="resolution" value="2.09 A"/>
    <property type="chains" value="A/B=2-196"/>
</dbReference>
<dbReference type="PDB" id="5IMB">
    <property type="method" value="X-ray"/>
    <property type="resolution" value="2.40 A"/>
    <property type="chains" value="A/B=2-196"/>
</dbReference>
<dbReference type="PDB" id="5IVP">
    <property type="method" value="X-ray"/>
    <property type="resolution" value="2.01 A"/>
    <property type="chains" value="A/B=2-196"/>
</dbReference>
<dbReference type="PDB" id="5ZK0">
    <property type="method" value="X-ray"/>
    <property type="resolution" value="2.55 A"/>
    <property type="chains" value="A/B=2-196"/>
</dbReference>
<dbReference type="PDBsum" id="2MJL"/>
<dbReference type="PDBsum" id="4Z86"/>
<dbReference type="PDBsum" id="4ZXP"/>
<dbReference type="PDBsum" id="5B6J"/>
<dbReference type="PDBsum" id="5EKT"/>
<dbReference type="PDBsum" id="5GVZ"/>
<dbReference type="PDBsum" id="5IKE"/>
<dbReference type="PDBsum" id="5IMB"/>
<dbReference type="PDBsum" id="5IVP"/>
<dbReference type="PDBsum" id="5ZK0"/>
<dbReference type="BMRB" id="Q9KQ21"/>
<dbReference type="SMR" id="Q9KQ21"/>
<dbReference type="STRING" id="243277.VC_2184"/>
<dbReference type="DNASU" id="2613320"/>
<dbReference type="EnsemblBacteria" id="AAF95329">
    <property type="protein sequence ID" value="AAF95329"/>
    <property type="gene ID" value="VC_2184"/>
</dbReference>
<dbReference type="KEGG" id="vch:VC_2184"/>
<dbReference type="PATRIC" id="fig|243277.26.peg.2082"/>
<dbReference type="eggNOG" id="COG0193">
    <property type="taxonomic scope" value="Bacteria"/>
</dbReference>
<dbReference type="HOGENOM" id="CLU_062456_3_1_6"/>
<dbReference type="BRENDA" id="3.1.1.29">
    <property type="organism ID" value="15862"/>
</dbReference>
<dbReference type="Proteomes" id="UP000000584">
    <property type="component" value="Chromosome 1"/>
</dbReference>
<dbReference type="GO" id="GO:0005737">
    <property type="term" value="C:cytoplasm"/>
    <property type="evidence" value="ECO:0007669"/>
    <property type="project" value="UniProtKB-SubCell"/>
</dbReference>
<dbReference type="GO" id="GO:0004045">
    <property type="term" value="F:peptidyl-tRNA hydrolase activity"/>
    <property type="evidence" value="ECO:0000318"/>
    <property type="project" value="GO_Central"/>
</dbReference>
<dbReference type="GO" id="GO:0000049">
    <property type="term" value="F:tRNA binding"/>
    <property type="evidence" value="ECO:0007669"/>
    <property type="project" value="UniProtKB-UniRule"/>
</dbReference>
<dbReference type="GO" id="GO:0006515">
    <property type="term" value="P:protein quality control for misfolded or incompletely synthesized proteins"/>
    <property type="evidence" value="ECO:0007669"/>
    <property type="project" value="UniProtKB-UniRule"/>
</dbReference>
<dbReference type="GO" id="GO:0072344">
    <property type="term" value="P:rescue of stalled ribosome"/>
    <property type="evidence" value="ECO:0007669"/>
    <property type="project" value="UniProtKB-UniRule"/>
</dbReference>
<dbReference type="CDD" id="cd00462">
    <property type="entry name" value="PTH"/>
    <property type="match status" value="1"/>
</dbReference>
<dbReference type="FunFam" id="3.40.50.1470:FF:000001">
    <property type="entry name" value="Peptidyl-tRNA hydrolase"/>
    <property type="match status" value="1"/>
</dbReference>
<dbReference type="Gene3D" id="3.40.50.1470">
    <property type="entry name" value="Peptidyl-tRNA hydrolase"/>
    <property type="match status" value="1"/>
</dbReference>
<dbReference type="HAMAP" id="MF_00083">
    <property type="entry name" value="Pept_tRNA_hydro_bact"/>
    <property type="match status" value="1"/>
</dbReference>
<dbReference type="InterPro" id="IPR001328">
    <property type="entry name" value="Pept_tRNA_hydro"/>
</dbReference>
<dbReference type="InterPro" id="IPR018171">
    <property type="entry name" value="Pept_tRNA_hydro_CS"/>
</dbReference>
<dbReference type="InterPro" id="IPR036416">
    <property type="entry name" value="Pept_tRNA_hydro_sf"/>
</dbReference>
<dbReference type="NCBIfam" id="TIGR00447">
    <property type="entry name" value="pth"/>
    <property type="match status" value="1"/>
</dbReference>
<dbReference type="PANTHER" id="PTHR17224">
    <property type="entry name" value="PEPTIDYL-TRNA HYDROLASE"/>
    <property type="match status" value="1"/>
</dbReference>
<dbReference type="PANTHER" id="PTHR17224:SF1">
    <property type="entry name" value="PEPTIDYL-TRNA HYDROLASE"/>
    <property type="match status" value="1"/>
</dbReference>
<dbReference type="Pfam" id="PF01195">
    <property type="entry name" value="Pept_tRNA_hydro"/>
    <property type="match status" value="1"/>
</dbReference>
<dbReference type="SUPFAM" id="SSF53178">
    <property type="entry name" value="Peptidyl-tRNA hydrolase-like"/>
    <property type="match status" value="1"/>
</dbReference>
<dbReference type="PROSITE" id="PS01195">
    <property type="entry name" value="PEPT_TRNA_HYDROL_1"/>
    <property type="match status" value="1"/>
</dbReference>
<dbReference type="PROSITE" id="PS01196">
    <property type="entry name" value="PEPT_TRNA_HYDROL_2"/>
    <property type="match status" value="1"/>
</dbReference>